<evidence type="ECO:0000255" key="1">
    <source>
        <dbReference type="HAMAP-Rule" id="MF_00295"/>
    </source>
</evidence>
<keyword id="KW-0012">Acyltransferase</keyword>
<keyword id="KW-0028">Amino-acid biosynthesis</keyword>
<keyword id="KW-0963">Cytoplasm</keyword>
<keyword id="KW-0486">Methionine biosynthesis</keyword>
<keyword id="KW-0808">Transferase</keyword>
<protein>
    <recommendedName>
        <fullName evidence="1">Homoserine O-acetyltransferase</fullName>
        <shortName evidence="1">HAT</shortName>
        <ecNumber evidence="1">2.3.1.31</ecNumber>
    </recommendedName>
    <alternativeName>
        <fullName evidence="1">Homoserine transacetylase</fullName>
        <shortName evidence="1">HTA</shortName>
    </alternativeName>
</protein>
<accession>B1HPA1</accession>
<proteinExistence type="inferred from homology"/>
<gene>
    <name evidence="1" type="primary">metAA</name>
    <name type="ordered locus">Bsph_3026</name>
</gene>
<organism>
    <name type="scientific">Lysinibacillus sphaericus (strain C3-41)</name>
    <dbReference type="NCBI Taxonomy" id="444177"/>
    <lineage>
        <taxon>Bacteria</taxon>
        <taxon>Bacillati</taxon>
        <taxon>Bacillota</taxon>
        <taxon>Bacilli</taxon>
        <taxon>Bacillales</taxon>
        <taxon>Bacillaceae</taxon>
        <taxon>Lysinibacillus</taxon>
    </lineage>
</organism>
<reference key="1">
    <citation type="journal article" date="2008" name="J. Bacteriol.">
        <title>Complete genome sequence of the mosquitocidal bacterium Bacillus sphaericus C3-41 and comparison with those of closely related Bacillus species.</title>
        <authorList>
            <person name="Hu X."/>
            <person name="Fan W."/>
            <person name="Han B."/>
            <person name="Liu H."/>
            <person name="Zheng D."/>
            <person name="Li Q."/>
            <person name="Dong W."/>
            <person name="Yan J."/>
            <person name="Gao M."/>
            <person name="Berry C."/>
            <person name="Yuan Z."/>
        </authorList>
    </citation>
    <scope>NUCLEOTIDE SEQUENCE [LARGE SCALE GENOMIC DNA]</scope>
    <source>
        <strain>C3-41</strain>
    </source>
</reference>
<comment type="function">
    <text evidence="1">Transfers an acetyl group from acetyl-CoA to L-homoserine, forming acetyl-L-homoserine.</text>
</comment>
<comment type="catalytic activity">
    <reaction evidence="1">
        <text>L-homoserine + acetyl-CoA = O-acetyl-L-homoserine + CoA</text>
        <dbReference type="Rhea" id="RHEA:13701"/>
        <dbReference type="ChEBI" id="CHEBI:57287"/>
        <dbReference type="ChEBI" id="CHEBI:57288"/>
        <dbReference type="ChEBI" id="CHEBI:57476"/>
        <dbReference type="ChEBI" id="CHEBI:57716"/>
        <dbReference type="EC" id="2.3.1.31"/>
    </reaction>
</comment>
<comment type="pathway">
    <text evidence="1">Amino-acid biosynthesis; L-methionine biosynthesis via de novo pathway; O-acetyl-L-homoserine from L-homoserine: step 1/1.</text>
</comment>
<comment type="subcellular location">
    <subcellularLocation>
        <location evidence="1">Cytoplasm</location>
    </subcellularLocation>
</comment>
<comment type="similarity">
    <text evidence="1">Belongs to the MetA family.</text>
</comment>
<dbReference type="EC" id="2.3.1.31" evidence="1"/>
<dbReference type="EMBL" id="CP000817">
    <property type="protein sequence ID" value="ACA40547.1"/>
    <property type="molecule type" value="Genomic_DNA"/>
</dbReference>
<dbReference type="SMR" id="B1HPA1"/>
<dbReference type="EnsemblBacteria" id="ACA40547">
    <property type="protein sequence ID" value="ACA40547"/>
    <property type="gene ID" value="Bsph_3026"/>
</dbReference>
<dbReference type="KEGG" id="lsp:Bsph_3026"/>
<dbReference type="HOGENOM" id="CLU_057851_0_1_9"/>
<dbReference type="UniPathway" id="UPA00051">
    <property type="reaction ID" value="UER00074"/>
</dbReference>
<dbReference type="Proteomes" id="UP000002164">
    <property type="component" value="Chromosome"/>
</dbReference>
<dbReference type="GO" id="GO:0005737">
    <property type="term" value="C:cytoplasm"/>
    <property type="evidence" value="ECO:0007669"/>
    <property type="project" value="UniProtKB-SubCell"/>
</dbReference>
<dbReference type="GO" id="GO:0004414">
    <property type="term" value="F:homoserine O-acetyltransferase activity"/>
    <property type="evidence" value="ECO:0007669"/>
    <property type="project" value="UniProtKB-EC"/>
</dbReference>
<dbReference type="GO" id="GO:0008899">
    <property type="term" value="F:homoserine O-succinyltransferase activity"/>
    <property type="evidence" value="ECO:0007669"/>
    <property type="project" value="UniProtKB-UniRule"/>
</dbReference>
<dbReference type="GO" id="GO:0019281">
    <property type="term" value="P:L-methionine biosynthetic process from homoserine via O-succinyl-L-homoserine and cystathionine"/>
    <property type="evidence" value="ECO:0007669"/>
    <property type="project" value="InterPro"/>
</dbReference>
<dbReference type="CDD" id="cd03131">
    <property type="entry name" value="GATase1_HTS"/>
    <property type="match status" value="1"/>
</dbReference>
<dbReference type="FunFam" id="3.40.50.880:FF:000004">
    <property type="entry name" value="Homoserine O-succinyltransferase"/>
    <property type="match status" value="1"/>
</dbReference>
<dbReference type="Gene3D" id="3.40.50.880">
    <property type="match status" value="1"/>
</dbReference>
<dbReference type="HAMAP" id="MF_00295">
    <property type="entry name" value="MetA_acyltransf"/>
    <property type="match status" value="1"/>
</dbReference>
<dbReference type="InterPro" id="IPR029062">
    <property type="entry name" value="Class_I_gatase-like"/>
</dbReference>
<dbReference type="InterPro" id="IPR005697">
    <property type="entry name" value="HST_MetA"/>
</dbReference>
<dbReference type="InterPro" id="IPR033752">
    <property type="entry name" value="MetA_family"/>
</dbReference>
<dbReference type="NCBIfam" id="TIGR01001">
    <property type="entry name" value="metA"/>
    <property type="match status" value="1"/>
</dbReference>
<dbReference type="PANTHER" id="PTHR20919">
    <property type="entry name" value="HOMOSERINE O-SUCCINYLTRANSFERASE"/>
    <property type="match status" value="1"/>
</dbReference>
<dbReference type="PANTHER" id="PTHR20919:SF0">
    <property type="entry name" value="HOMOSERINE O-SUCCINYLTRANSFERASE"/>
    <property type="match status" value="1"/>
</dbReference>
<dbReference type="Pfam" id="PF04204">
    <property type="entry name" value="HTS"/>
    <property type="match status" value="1"/>
</dbReference>
<dbReference type="PIRSF" id="PIRSF000450">
    <property type="entry name" value="H_ser_succinyltr"/>
    <property type="match status" value="1"/>
</dbReference>
<dbReference type="SUPFAM" id="SSF52317">
    <property type="entry name" value="Class I glutamine amidotransferase-like"/>
    <property type="match status" value="1"/>
</dbReference>
<name>METAA_LYSSC</name>
<sequence length="311" mass="36203">MPINIPKNLPAGEHLREEKIFVMEEDRARTQQIRPLNILILNLMPEKEKTELQLLRLLGNTPLQVNITFLNTATHESKNVSKSHLQLFYTTFNQIRHRRYDGMIITGAPVEKMPFEEVNYWQEIAEIMDWSKKNVTSVLHICWGAQAALYHHYGIGKIELSAKCSGVYSHVITDLTVDLVRGFSDLFTAPHSRYTSVSIDEVRNHPDLRLLSYSEDAGVFIVQSKDNKNIMITGHLEYDATTLADEYSRDVAKGIDINVPVNYFPNDDPEKEPMNTWRAHTHLLFSNWLNYYVYQETPYEWDFVDEIEYHI</sequence>
<feature type="chain" id="PRO_1000115183" description="Homoserine O-acetyltransferase">
    <location>
        <begin position="1"/>
        <end position="311"/>
    </location>
</feature>
<feature type="active site" description="Acyl-thioester intermediate" evidence="1">
    <location>
        <position position="142"/>
    </location>
</feature>
<feature type="active site" description="Proton acceptor" evidence="1">
    <location>
        <position position="235"/>
    </location>
</feature>
<feature type="active site" evidence="1">
    <location>
        <position position="237"/>
    </location>
</feature>
<feature type="binding site" evidence="1">
    <location>
        <position position="163"/>
    </location>
    <ligand>
        <name>substrate</name>
    </ligand>
</feature>
<feature type="binding site" evidence="1">
    <location>
        <position position="192"/>
    </location>
    <ligand>
        <name>substrate</name>
    </ligand>
</feature>
<feature type="binding site" evidence="1">
    <location>
        <position position="249"/>
    </location>
    <ligand>
        <name>substrate</name>
    </ligand>
</feature>
<feature type="site" description="Important for acyl-CoA specificity" evidence="1">
    <location>
        <position position="111"/>
    </location>
</feature>
<feature type="site" description="Important for substrate specificity" evidence="1">
    <location>
        <position position="192"/>
    </location>
</feature>